<feature type="chain" id="PRO_0000298193" description="Cell division topological specificity factor">
    <location>
        <begin position="1"/>
        <end position="89"/>
    </location>
</feature>
<gene>
    <name evidence="1" type="primary">minE</name>
    <name type="ordered locus">SG1334</name>
</gene>
<protein>
    <recommendedName>
        <fullName evidence="1">Cell division topological specificity factor</fullName>
    </recommendedName>
</protein>
<dbReference type="EMBL" id="AP008232">
    <property type="protein sequence ID" value="BAE74609.1"/>
    <property type="molecule type" value="Genomic_DNA"/>
</dbReference>
<dbReference type="RefSeq" id="WP_011411162.1">
    <property type="nucleotide sequence ID" value="NC_007712.1"/>
</dbReference>
<dbReference type="SMR" id="Q2NTB6"/>
<dbReference type="STRING" id="343509.SG1334"/>
<dbReference type="KEGG" id="sgl:SG1334"/>
<dbReference type="eggNOG" id="COG0851">
    <property type="taxonomic scope" value="Bacteria"/>
</dbReference>
<dbReference type="HOGENOM" id="CLU_137929_2_2_6"/>
<dbReference type="OrthoDB" id="9802655at2"/>
<dbReference type="BioCyc" id="SGLO343509:SGP1_RS11740-MONOMER"/>
<dbReference type="Proteomes" id="UP000001932">
    <property type="component" value="Chromosome"/>
</dbReference>
<dbReference type="GO" id="GO:0051301">
    <property type="term" value="P:cell division"/>
    <property type="evidence" value="ECO:0007669"/>
    <property type="project" value="UniProtKB-KW"/>
</dbReference>
<dbReference type="GO" id="GO:0032955">
    <property type="term" value="P:regulation of division septum assembly"/>
    <property type="evidence" value="ECO:0007669"/>
    <property type="project" value="InterPro"/>
</dbReference>
<dbReference type="FunFam" id="3.30.1070.10:FF:000001">
    <property type="entry name" value="Cell division topological specificity factor"/>
    <property type="match status" value="1"/>
</dbReference>
<dbReference type="Gene3D" id="3.30.1070.10">
    <property type="entry name" value="Cell division topological specificity factor MinE"/>
    <property type="match status" value="1"/>
</dbReference>
<dbReference type="HAMAP" id="MF_00262">
    <property type="entry name" value="MinE"/>
    <property type="match status" value="1"/>
</dbReference>
<dbReference type="InterPro" id="IPR005527">
    <property type="entry name" value="MinE"/>
</dbReference>
<dbReference type="InterPro" id="IPR036707">
    <property type="entry name" value="MinE_sf"/>
</dbReference>
<dbReference type="NCBIfam" id="TIGR01215">
    <property type="entry name" value="minE"/>
    <property type="match status" value="1"/>
</dbReference>
<dbReference type="NCBIfam" id="NF001422">
    <property type="entry name" value="PRK00296.1"/>
    <property type="match status" value="1"/>
</dbReference>
<dbReference type="Pfam" id="PF03776">
    <property type="entry name" value="MinE"/>
    <property type="match status" value="1"/>
</dbReference>
<dbReference type="SUPFAM" id="SSF55229">
    <property type="entry name" value="Cell division protein MinE topological specificity domain"/>
    <property type="match status" value="1"/>
</dbReference>
<reference key="1">
    <citation type="journal article" date="2006" name="Genome Res.">
        <title>Massive genome erosion and functional adaptations provide insights into the symbiotic lifestyle of Sodalis glossinidius in the tsetse host.</title>
        <authorList>
            <person name="Toh H."/>
            <person name="Weiss B.L."/>
            <person name="Perkin S.A.H."/>
            <person name="Yamashita A."/>
            <person name="Oshima K."/>
            <person name="Hattori M."/>
            <person name="Aksoy S."/>
        </authorList>
    </citation>
    <scope>NUCLEOTIDE SEQUENCE [LARGE SCALE GENOMIC DNA]</scope>
    <source>
        <strain>morsitans</strain>
    </source>
</reference>
<sequence length="89" mass="10324">MALLDFFLSRKKSTANIAKERLQIIVAERRRGDNEPHYLPQLKRDLLEVISKYVQIDPEMLSVQLEKKDGDISILELNVTLPETEETTK</sequence>
<evidence type="ECO:0000255" key="1">
    <source>
        <dbReference type="HAMAP-Rule" id="MF_00262"/>
    </source>
</evidence>
<proteinExistence type="inferred from homology"/>
<comment type="function">
    <text evidence="1">Prevents the cell division inhibition by proteins MinC and MinD at internal division sites while permitting inhibition at polar sites. This ensures cell division at the proper site by restricting the formation of a division septum at the midpoint of the long axis of the cell.</text>
</comment>
<comment type="similarity">
    <text evidence="1">Belongs to the MinE family.</text>
</comment>
<accession>Q2NTB6</accession>
<name>MINE_SODGM</name>
<keyword id="KW-0131">Cell cycle</keyword>
<keyword id="KW-0132">Cell division</keyword>
<organism>
    <name type="scientific">Sodalis glossinidius (strain morsitans)</name>
    <dbReference type="NCBI Taxonomy" id="343509"/>
    <lineage>
        <taxon>Bacteria</taxon>
        <taxon>Pseudomonadati</taxon>
        <taxon>Pseudomonadota</taxon>
        <taxon>Gammaproteobacteria</taxon>
        <taxon>Enterobacterales</taxon>
        <taxon>Bruguierivoracaceae</taxon>
        <taxon>Sodalis</taxon>
    </lineage>
</organism>